<name>POK_DROME</name>
<proteinExistence type="evidence at protein level"/>
<keyword id="KW-0002">3D-structure</keyword>
<keyword id="KW-0217">Developmental protein</keyword>
<keyword id="KW-0238">DNA-binding</keyword>
<keyword id="KW-0539">Nucleus</keyword>
<keyword id="KW-0597">Phosphoprotein</keyword>
<keyword id="KW-1185">Reference proteome</keyword>
<keyword id="KW-0678">Repressor</keyword>
<keyword id="KW-0804">Transcription</keyword>
<keyword id="KW-0805">Transcription regulation</keyword>
<organism>
    <name type="scientific">Drosophila melanogaster</name>
    <name type="common">Fruit fly</name>
    <dbReference type="NCBI Taxonomy" id="7227"/>
    <lineage>
        <taxon>Eukaryota</taxon>
        <taxon>Metazoa</taxon>
        <taxon>Ecdysozoa</taxon>
        <taxon>Arthropoda</taxon>
        <taxon>Hexapoda</taxon>
        <taxon>Insecta</taxon>
        <taxon>Pterygota</taxon>
        <taxon>Neoptera</taxon>
        <taxon>Endopterygota</taxon>
        <taxon>Diptera</taxon>
        <taxon>Brachycera</taxon>
        <taxon>Muscomorpha</taxon>
        <taxon>Ephydroidea</taxon>
        <taxon>Drosophilidae</taxon>
        <taxon>Drosophila</taxon>
        <taxon>Sophophora</taxon>
    </lineage>
</organism>
<reference key="1">
    <citation type="journal article" date="1992" name="Cell">
        <title>Negative control of photoreceptor development in Drosophila by the product of the yan gene, an ETS domain protein.</title>
        <authorList>
            <person name="Lai Z.C."/>
            <person name="Rubin G.M."/>
        </authorList>
    </citation>
    <scope>NUCLEOTIDE SEQUENCE [MRNA]</scope>
    <scope>FUNCTION</scope>
    <scope>SUBCELLULAR LOCATION</scope>
    <scope>TISSUE SPECIFICITY</scope>
    <scope>DEVELOPMENTAL STAGE</scope>
</reference>
<reference key="2">
    <citation type="journal article" date="1992" name="Proc. Natl. Acad. Sci. U.S.A.">
        <title>Pokkuri, a Drosophila gene encoding an E-26-specific (Ets) domain protein, prevents overproduction of the R7 photoreceptor.</title>
        <authorList>
            <person name="Tei H."/>
            <person name="Nihonmatsu I."/>
            <person name="Yokokura T."/>
            <person name="Ueda R."/>
            <person name="Sano Y."/>
            <person name="Okuda T."/>
            <person name="Sato K."/>
            <person name="Hirata K."/>
            <person name="Fujita S.C."/>
            <person name="Yamamoto D."/>
        </authorList>
    </citation>
    <scope>NUCLEOTIDE SEQUENCE [MRNA]</scope>
    <scope>FUNCTION</scope>
</reference>
<reference key="3">
    <citation type="journal article" date="2000" name="Science">
        <title>The genome sequence of Drosophila melanogaster.</title>
        <authorList>
            <person name="Adams M.D."/>
            <person name="Celniker S.E."/>
            <person name="Holt R.A."/>
            <person name="Evans C.A."/>
            <person name="Gocayne J.D."/>
            <person name="Amanatides P.G."/>
            <person name="Scherer S.E."/>
            <person name="Li P.W."/>
            <person name="Hoskins R.A."/>
            <person name="Galle R.F."/>
            <person name="George R.A."/>
            <person name="Lewis S.E."/>
            <person name="Richards S."/>
            <person name="Ashburner M."/>
            <person name="Henderson S.N."/>
            <person name="Sutton G.G."/>
            <person name="Wortman J.R."/>
            <person name="Yandell M.D."/>
            <person name="Zhang Q."/>
            <person name="Chen L.X."/>
            <person name="Brandon R.C."/>
            <person name="Rogers Y.-H.C."/>
            <person name="Blazej R.G."/>
            <person name="Champe M."/>
            <person name="Pfeiffer B.D."/>
            <person name="Wan K.H."/>
            <person name="Doyle C."/>
            <person name="Baxter E.G."/>
            <person name="Helt G."/>
            <person name="Nelson C.R."/>
            <person name="Miklos G.L.G."/>
            <person name="Abril J.F."/>
            <person name="Agbayani A."/>
            <person name="An H.-J."/>
            <person name="Andrews-Pfannkoch C."/>
            <person name="Baldwin D."/>
            <person name="Ballew R.M."/>
            <person name="Basu A."/>
            <person name="Baxendale J."/>
            <person name="Bayraktaroglu L."/>
            <person name="Beasley E.M."/>
            <person name="Beeson K.Y."/>
            <person name="Benos P.V."/>
            <person name="Berman B.P."/>
            <person name="Bhandari D."/>
            <person name="Bolshakov S."/>
            <person name="Borkova D."/>
            <person name="Botchan M.R."/>
            <person name="Bouck J."/>
            <person name="Brokstein P."/>
            <person name="Brottier P."/>
            <person name="Burtis K.C."/>
            <person name="Busam D.A."/>
            <person name="Butler H."/>
            <person name="Cadieu E."/>
            <person name="Center A."/>
            <person name="Chandra I."/>
            <person name="Cherry J.M."/>
            <person name="Cawley S."/>
            <person name="Dahlke C."/>
            <person name="Davenport L.B."/>
            <person name="Davies P."/>
            <person name="de Pablos B."/>
            <person name="Delcher A."/>
            <person name="Deng Z."/>
            <person name="Mays A.D."/>
            <person name="Dew I."/>
            <person name="Dietz S.M."/>
            <person name="Dodson K."/>
            <person name="Doup L.E."/>
            <person name="Downes M."/>
            <person name="Dugan-Rocha S."/>
            <person name="Dunkov B.C."/>
            <person name="Dunn P."/>
            <person name="Durbin K.J."/>
            <person name="Evangelista C.C."/>
            <person name="Ferraz C."/>
            <person name="Ferriera S."/>
            <person name="Fleischmann W."/>
            <person name="Fosler C."/>
            <person name="Gabrielian A.E."/>
            <person name="Garg N.S."/>
            <person name="Gelbart W.M."/>
            <person name="Glasser K."/>
            <person name="Glodek A."/>
            <person name="Gong F."/>
            <person name="Gorrell J.H."/>
            <person name="Gu Z."/>
            <person name="Guan P."/>
            <person name="Harris M."/>
            <person name="Harris N.L."/>
            <person name="Harvey D.A."/>
            <person name="Heiman T.J."/>
            <person name="Hernandez J.R."/>
            <person name="Houck J."/>
            <person name="Hostin D."/>
            <person name="Houston K.A."/>
            <person name="Howland T.J."/>
            <person name="Wei M.-H."/>
            <person name="Ibegwam C."/>
            <person name="Jalali M."/>
            <person name="Kalush F."/>
            <person name="Karpen G.H."/>
            <person name="Ke Z."/>
            <person name="Kennison J.A."/>
            <person name="Ketchum K.A."/>
            <person name="Kimmel B.E."/>
            <person name="Kodira C.D."/>
            <person name="Kraft C.L."/>
            <person name="Kravitz S."/>
            <person name="Kulp D."/>
            <person name="Lai Z."/>
            <person name="Lasko P."/>
            <person name="Lei Y."/>
            <person name="Levitsky A.A."/>
            <person name="Li J.H."/>
            <person name="Li Z."/>
            <person name="Liang Y."/>
            <person name="Lin X."/>
            <person name="Liu X."/>
            <person name="Mattei B."/>
            <person name="McIntosh T.C."/>
            <person name="McLeod M.P."/>
            <person name="McPherson D."/>
            <person name="Merkulov G."/>
            <person name="Milshina N.V."/>
            <person name="Mobarry C."/>
            <person name="Morris J."/>
            <person name="Moshrefi A."/>
            <person name="Mount S.M."/>
            <person name="Moy M."/>
            <person name="Murphy B."/>
            <person name="Murphy L."/>
            <person name="Muzny D.M."/>
            <person name="Nelson D.L."/>
            <person name="Nelson D.R."/>
            <person name="Nelson K.A."/>
            <person name="Nixon K."/>
            <person name="Nusskern D.R."/>
            <person name="Pacleb J.M."/>
            <person name="Palazzolo M."/>
            <person name="Pittman G.S."/>
            <person name="Pan S."/>
            <person name="Pollard J."/>
            <person name="Puri V."/>
            <person name="Reese M.G."/>
            <person name="Reinert K."/>
            <person name="Remington K."/>
            <person name="Saunders R.D.C."/>
            <person name="Scheeler F."/>
            <person name="Shen H."/>
            <person name="Shue B.C."/>
            <person name="Siden-Kiamos I."/>
            <person name="Simpson M."/>
            <person name="Skupski M.P."/>
            <person name="Smith T.J."/>
            <person name="Spier E."/>
            <person name="Spradling A.C."/>
            <person name="Stapleton M."/>
            <person name="Strong R."/>
            <person name="Sun E."/>
            <person name="Svirskas R."/>
            <person name="Tector C."/>
            <person name="Turner R."/>
            <person name="Venter E."/>
            <person name="Wang A.H."/>
            <person name="Wang X."/>
            <person name="Wang Z.-Y."/>
            <person name="Wassarman D.A."/>
            <person name="Weinstock G.M."/>
            <person name="Weissenbach J."/>
            <person name="Williams S.M."/>
            <person name="Woodage T."/>
            <person name="Worley K.C."/>
            <person name="Wu D."/>
            <person name="Yang S."/>
            <person name="Yao Q.A."/>
            <person name="Ye J."/>
            <person name="Yeh R.-F."/>
            <person name="Zaveri J.S."/>
            <person name="Zhan M."/>
            <person name="Zhang G."/>
            <person name="Zhao Q."/>
            <person name="Zheng L."/>
            <person name="Zheng X.H."/>
            <person name="Zhong F.N."/>
            <person name="Zhong W."/>
            <person name="Zhou X."/>
            <person name="Zhu S.C."/>
            <person name="Zhu X."/>
            <person name="Smith H.O."/>
            <person name="Gibbs R.A."/>
            <person name="Myers E.W."/>
            <person name="Rubin G.M."/>
            <person name="Venter J.C."/>
        </authorList>
    </citation>
    <scope>NUCLEOTIDE SEQUENCE [LARGE SCALE GENOMIC DNA]</scope>
    <source>
        <strain>Berkeley</strain>
    </source>
</reference>
<reference key="4">
    <citation type="journal article" date="2002" name="Genome Biol.">
        <title>Annotation of the Drosophila melanogaster euchromatic genome: a systematic review.</title>
        <authorList>
            <person name="Misra S."/>
            <person name="Crosby M.A."/>
            <person name="Mungall C.J."/>
            <person name="Matthews B.B."/>
            <person name="Campbell K.S."/>
            <person name="Hradecky P."/>
            <person name="Huang Y."/>
            <person name="Kaminker J.S."/>
            <person name="Millburn G.H."/>
            <person name="Prochnik S.E."/>
            <person name="Smith C.D."/>
            <person name="Tupy J.L."/>
            <person name="Whitfield E.J."/>
            <person name="Bayraktaroglu L."/>
            <person name="Berman B.P."/>
            <person name="Bettencourt B.R."/>
            <person name="Celniker S.E."/>
            <person name="de Grey A.D.N.J."/>
            <person name="Drysdale R.A."/>
            <person name="Harris N.L."/>
            <person name="Richter J."/>
            <person name="Russo S."/>
            <person name="Schroeder A.J."/>
            <person name="Shu S.Q."/>
            <person name="Stapleton M."/>
            <person name="Yamada C."/>
            <person name="Ashburner M."/>
            <person name="Gelbart W.M."/>
            <person name="Rubin G.M."/>
            <person name="Lewis S.E."/>
        </authorList>
    </citation>
    <scope>GENOME REANNOTATION</scope>
    <source>
        <strain>Berkeley</strain>
    </source>
</reference>
<reference key="5">
    <citation type="submission" date="2007-04" db="EMBL/GenBank/DDBJ databases">
        <authorList>
            <person name="Stapleton M."/>
            <person name="Brokstein P."/>
            <person name="Hong L."/>
            <person name="Agbayani A."/>
            <person name="Carlson J.W."/>
            <person name="Champe M."/>
            <person name="Chavez C."/>
            <person name="Dorsett V."/>
            <person name="Dresnek D."/>
            <person name="Farfan D."/>
            <person name="Frise E."/>
            <person name="George R.A."/>
            <person name="Gonzalez M."/>
            <person name="Guarin H."/>
            <person name="Kronmiller B."/>
            <person name="Li P.W."/>
            <person name="Liao G."/>
            <person name="Miranda A."/>
            <person name="Mungall C.J."/>
            <person name="Nunoo J."/>
            <person name="Pacleb J.M."/>
            <person name="Paragas V."/>
            <person name="Park S."/>
            <person name="Patel S."/>
            <person name="Phouanenavong S."/>
            <person name="Wan K.H."/>
            <person name="Yu C."/>
            <person name="Lewis S.E."/>
            <person name="Rubin G.M."/>
            <person name="Celniker S.E."/>
        </authorList>
    </citation>
    <scope>NUCLEOTIDE SEQUENCE [LARGE SCALE MRNA]</scope>
    <source>
        <strain>Berkeley</strain>
        <tissue>Embryo</tissue>
    </source>
</reference>
<reference key="6">
    <citation type="journal article" date="1994" name="Cell">
        <title>The activities of two Ets-related transcription factors required for Drosophila eye development are modulated by the Ras/MAPK pathway.</title>
        <authorList>
            <person name="O'Neill E.M."/>
            <person name="Rebay I."/>
            <person name="Tjian R."/>
            <person name="Rubin G.M."/>
        </authorList>
    </citation>
    <scope>FUNCTION</scope>
    <scope>PHOSPHORYLATION</scope>
</reference>
<reference key="7">
    <citation type="journal article" date="2008" name="J. Proteome Res.">
        <title>Phosphoproteome analysis of Drosophila melanogaster embryos.</title>
        <authorList>
            <person name="Zhai B."/>
            <person name="Villen J."/>
            <person name="Beausoleil S.A."/>
            <person name="Mintseris J."/>
            <person name="Gygi S.P."/>
        </authorList>
    </citation>
    <scope>PHOSPHORYLATION [LARGE SCALE ANALYSIS] AT SER-543; SER-677; SER-682 AND SER-696</scope>
    <scope>IDENTIFICATION BY MASS SPECTROMETRY</scope>
    <source>
        <tissue>Embryo</tissue>
    </source>
</reference>
<comment type="function">
    <text evidence="4 5 7">Ets-related protein that functions as a negative regulator of photoreceptor development acting antagonistically to pnt and the proneural signal mediated by RAS (PubMed:1495974, PubMed:1505027, PubMed:8033205). It acts upstream of SINA to inhibit R7 development (PubMed:1495974, PubMed:1505027).</text>
</comment>
<comment type="subcellular location">
    <subcellularLocation>
        <location evidence="1 5">Nucleus</location>
    </subcellularLocation>
    <text>In undifferentiated cells during the early stages of eye development.</text>
</comment>
<comment type="tissue specificity">
    <text evidence="5">Expressed in R7 and cone cells of the eye.</text>
</comment>
<comment type="developmental stage">
    <text evidence="5">Expressed in the embryo.</text>
</comment>
<comment type="PTM">
    <text evidence="7">Phosphorylated in response to MAPK signaling. May be phosphorylated by rl.</text>
</comment>
<comment type="miscellaneous">
    <text>'Pokkuri' means 'dropping dead' in Japanese. Flies lacking aop result in the differentiation of supernumerary photoreceptors in the eye.</text>
</comment>
<comment type="similarity">
    <text evidence="8">Belongs to the ETS family.</text>
</comment>
<comment type="sequence caution" evidence="8">
    <conflict type="frameshift">
        <sequence resource="EMBL-CDS" id="BAA01080"/>
    </conflict>
</comment>
<feature type="chain" id="PRO_0000204131" description="Ets DNA-binding protein pokkuri">
    <location>
        <begin position="1"/>
        <end position="732"/>
    </location>
</feature>
<feature type="domain" description="PNT" evidence="2">
    <location>
        <begin position="33"/>
        <end position="117"/>
    </location>
</feature>
<feature type="DNA-binding region" description="ETS" evidence="1">
    <location>
        <begin position="396"/>
        <end position="479"/>
    </location>
</feature>
<feature type="region of interest" description="Disordered" evidence="3">
    <location>
        <begin position="133"/>
        <end position="295"/>
    </location>
</feature>
<feature type="region of interest" description="Disordered" evidence="3">
    <location>
        <begin position="496"/>
        <end position="548"/>
    </location>
</feature>
<feature type="region of interest" description="Disordered" evidence="3">
    <location>
        <begin position="590"/>
        <end position="647"/>
    </location>
</feature>
<feature type="region of interest" description="Disordered" evidence="3">
    <location>
        <begin position="674"/>
        <end position="732"/>
    </location>
</feature>
<feature type="compositionally biased region" description="Pro residues" evidence="3">
    <location>
        <begin position="141"/>
        <end position="157"/>
    </location>
</feature>
<feature type="compositionally biased region" description="Polar residues" evidence="3">
    <location>
        <begin position="176"/>
        <end position="193"/>
    </location>
</feature>
<feature type="compositionally biased region" description="Low complexity" evidence="3">
    <location>
        <begin position="205"/>
        <end position="240"/>
    </location>
</feature>
<feature type="compositionally biased region" description="Low complexity" evidence="3">
    <location>
        <begin position="506"/>
        <end position="539"/>
    </location>
</feature>
<feature type="compositionally biased region" description="Polar residues" evidence="3">
    <location>
        <begin position="637"/>
        <end position="647"/>
    </location>
</feature>
<feature type="compositionally biased region" description="Polar residues" evidence="3">
    <location>
        <begin position="690"/>
        <end position="709"/>
    </location>
</feature>
<feature type="modified residue" description="Phosphoserine" evidence="6">
    <location>
        <position position="543"/>
    </location>
</feature>
<feature type="modified residue" description="Phosphoserine" evidence="6">
    <location>
        <position position="677"/>
    </location>
</feature>
<feature type="modified residue" description="Phosphoserine" evidence="6">
    <location>
        <position position="682"/>
    </location>
</feature>
<feature type="modified residue" description="Phosphoserine" evidence="6">
    <location>
        <position position="696"/>
    </location>
</feature>
<feature type="sequence conflict" description="In Ref. 2; BAA01080." evidence="8" ref="2">
    <original>R</original>
    <variation>C</variation>
    <location>
        <position position="27"/>
    </location>
</feature>
<feature type="sequence conflict" description="In Ref. 2; BAA01080." evidence="8" ref="2">
    <original>G</original>
    <variation>S</variation>
    <location>
        <position position="505"/>
    </location>
</feature>
<feature type="sequence conflict" description="In Ref. 2; BAA01080." evidence="8" ref="2">
    <original>P</original>
    <variation>A</variation>
    <location>
        <position position="527"/>
    </location>
</feature>
<feature type="sequence conflict" description="In Ref. 5; AAQ23555." evidence="8" ref="5">
    <original>P</original>
    <variation>R</variation>
    <location>
        <position position="567"/>
    </location>
</feature>
<feature type="sequence conflict" description="In Ref. 2; BAA01080." evidence="8" ref="2">
    <original>P</original>
    <variation>S</variation>
    <location>
        <position position="614"/>
    </location>
</feature>
<feature type="sequence conflict" description="In Ref. 5; AAQ23555." evidence="8" ref="5">
    <original>S</original>
    <variation>P</variation>
    <location>
        <position position="693"/>
    </location>
</feature>
<feature type="helix" evidence="9">
    <location>
        <begin position="51"/>
        <end position="53"/>
    </location>
</feature>
<feature type="helix" evidence="9">
    <location>
        <begin position="56"/>
        <end position="69"/>
    </location>
</feature>
<feature type="helix" evidence="9">
    <location>
        <begin position="77"/>
        <end position="80"/>
    </location>
</feature>
<feature type="helix" evidence="9">
    <location>
        <begin position="84"/>
        <end position="87"/>
    </location>
</feature>
<feature type="helix" evidence="9">
    <location>
        <begin position="92"/>
        <end position="98"/>
    </location>
</feature>
<feature type="turn" evidence="9">
    <location>
        <begin position="100"/>
        <end position="102"/>
    </location>
</feature>
<feature type="helix" evidence="9">
    <location>
        <begin position="103"/>
        <end position="118"/>
    </location>
</feature>
<evidence type="ECO:0000255" key="1">
    <source>
        <dbReference type="PROSITE-ProRule" id="PRU00237"/>
    </source>
</evidence>
<evidence type="ECO:0000255" key="2">
    <source>
        <dbReference type="PROSITE-ProRule" id="PRU00762"/>
    </source>
</evidence>
<evidence type="ECO:0000256" key="3">
    <source>
        <dbReference type="SAM" id="MobiDB-lite"/>
    </source>
</evidence>
<evidence type="ECO:0000269" key="4">
    <source>
    </source>
</evidence>
<evidence type="ECO:0000269" key="5">
    <source>
    </source>
</evidence>
<evidence type="ECO:0000269" key="6">
    <source>
    </source>
</evidence>
<evidence type="ECO:0000269" key="7">
    <source>
    </source>
</evidence>
<evidence type="ECO:0000305" key="8"/>
<evidence type="ECO:0007829" key="9">
    <source>
        <dbReference type="PDB" id="1SV0"/>
    </source>
</evidence>
<gene>
    <name type="primary">aop</name>
    <name type="synonym">pok</name>
    <name type="synonym">Yan</name>
    <name type="ORF">CG3166</name>
</gene>
<sequence>MSKMKMLPVQLSLNSLNPGIWSDVLWRCPPAPSSQLAELKTQLPPSLPSDPRLWSREDVLVFLRFCVREFDLPKLDFDLFQMNGKALCLLTRADFGHRCPGAGDVLHNVLQMLIIESHMMQWHLPNSPVTPTSRYPLSPHSHPPTPTWPPLNAPPENSPFHSSAHSLAGHHFMAPNSVTLSPPPSVDSQASSPPQAPYQNGGATGAAPGSAGGSAPAAGGATNTSNPTSSSASSTGSNGSQPNIMPMKGISSASSNHSDSEEEYSETSGGVSKMPPAPLSYSTASPPGTPILKDIKPNWTQQLTNSFVNSWSQQQQQQQQQQAAAVAAVAAQAQQHQLQQQQQQQQLPQKLTLDNTAGPVVTPAGGSISAPTTPSYMYKAKREFFPENSEPNTNGRLLWDFLQQLLNDRNQKYSDLIAWKCRDTGVFKIVDPAGLAKLWGIQKNHLSMNYDKMSRALRYYYRVNILRKVQGERHCYQFLRNPTELKNIKNISLLRQSTPANGNGGSPSMPQGSSQAPGSPAGQNWNPQQQSQQQQQSPQRPASRNGPMSLPAVAAVAAAAAAAYGPPPTSPLFMHAINGAFHYLSAAAAGPPPNSPALNTPSAVGGPDKFQFHPLKLENGSGSGSESAGEDLKPTDLSVSSKSTATSNEDCYPLIRNADGLTTIKLIRYNEHQVAASPAGQSPKHDDQQAGASNASSSPRPMDQASEQAQPVPMESDCNGGESEDSFRHMQQ</sequence>
<protein>
    <recommendedName>
        <fullName>Ets DNA-binding protein pokkuri</fullName>
    </recommendedName>
    <alternativeName>
        <fullName>Protein anterior open</fullName>
    </alternativeName>
    <alternativeName>
        <fullName>Protein yan</fullName>
    </alternativeName>
</protein>
<dbReference type="EMBL" id="M97693">
    <property type="protein sequence ID" value="AAA29023.1"/>
    <property type="molecule type" value="mRNA"/>
</dbReference>
<dbReference type="EMBL" id="D10228">
    <property type="protein sequence ID" value="BAA01080.1"/>
    <property type="status" value="ALT_FRAME"/>
    <property type="molecule type" value="mRNA"/>
</dbReference>
<dbReference type="EMBL" id="AE014134">
    <property type="protein sequence ID" value="AAF51297.1"/>
    <property type="molecule type" value="Genomic_DNA"/>
</dbReference>
<dbReference type="EMBL" id="AE014134">
    <property type="protein sequence ID" value="AAN10445.1"/>
    <property type="molecule type" value="Genomic_DNA"/>
</dbReference>
<dbReference type="EMBL" id="BT010237">
    <property type="protein sequence ID" value="AAQ23555.1"/>
    <property type="molecule type" value="mRNA"/>
</dbReference>
<dbReference type="EMBL" id="BT015272">
    <property type="protein sequence ID" value="AAT94501.1"/>
    <property type="molecule type" value="mRNA"/>
</dbReference>
<dbReference type="PIR" id="A43315">
    <property type="entry name" value="A43315"/>
</dbReference>
<dbReference type="PIR" id="A46193">
    <property type="entry name" value="A46193"/>
</dbReference>
<dbReference type="RefSeq" id="NP_001259908.1">
    <property type="nucleotide sequence ID" value="NM_001272979.1"/>
</dbReference>
<dbReference type="RefSeq" id="NP_001259909.1">
    <property type="nucleotide sequence ID" value="NM_001272980.1"/>
</dbReference>
<dbReference type="RefSeq" id="NP_001259910.1">
    <property type="nucleotide sequence ID" value="NM_001272981.1"/>
</dbReference>
<dbReference type="RefSeq" id="NP_523455.2">
    <property type="nucleotide sequence ID" value="NM_078731.3"/>
</dbReference>
<dbReference type="RefSeq" id="NP_722766.1">
    <property type="nucleotide sequence ID" value="NM_164457.2"/>
</dbReference>
<dbReference type="PDB" id="1SV0">
    <property type="method" value="X-ray"/>
    <property type="resolution" value="2.07 A"/>
    <property type="chains" value="A/B=42-118"/>
</dbReference>
<dbReference type="PDB" id="1SV4">
    <property type="method" value="X-ray"/>
    <property type="resolution" value="2.15 A"/>
    <property type="chains" value="A/B=42-118"/>
</dbReference>
<dbReference type="PDBsum" id="1SV0"/>
<dbReference type="PDBsum" id="1SV4"/>
<dbReference type="SMR" id="Q01842"/>
<dbReference type="BioGRID" id="59621">
    <property type="interactions" value="64"/>
</dbReference>
<dbReference type="DIP" id="DIP-20916N"/>
<dbReference type="FunCoup" id="Q01842">
    <property type="interactions" value="467"/>
</dbReference>
<dbReference type="IntAct" id="Q01842">
    <property type="interactions" value="2"/>
</dbReference>
<dbReference type="STRING" id="7227.FBpp0303508"/>
<dbReference type="GlyGen" id="Q01842">
    <property type="glycosylation" value="4 sites"/>
</dbReference>
<dbReference type="iPTMnet" id="Q01842"/>
<dbReference type="PaxDb" id="7227-FBpp0077522"/>
<dbReference type="DNASU" id="33392"/>
<dbReference type="EnsemblMetazoa" id="FBtr0077850">
    <property type="protein sequence ID" value="FBpp0077522"/>
    <property type="gene ID" value="FBgn0000097"/>
</dbReference>
<dbReference type="EnsemblMetazoa" id="FBtr0077851">
    <property type="protein sequence ID" value="FBpp0077523"/>
    <property type="gene ID" value="FBgn0000097"/>
</dbReference>
<dbReference type="EnsemblMetazoa" id="FBtr0330658">
    <property type="protein sequence ID" value="FBpp0303508"/>
    <property type="gene ID" value="FBgn0000097"/>
</dbReference>
<dbReference type="EnsemblMetazoa" id="FBtr0330659">
    <property type="protein sequence ID" value="FBpp0303509"/>
    <property type="gene ID" value="FBgn0000097"/>
</dbReference>
<dbReference type="EnsemblMetazoa" id="FBtr0330660">
    <property type="protein sequence ID" value="FBpp0303510"/>
    <property type="gene ID" value="FBgn0000097"/>
</dbReference>
<dbReference type="GeneID" id="33392"/>
<dbReference type="KEGG" id="dme:Dmel_CG3166"/>
<dbReference type="AGR" id="FB:FBgn0000097"/>
<dbReference type="CTD" id="33392"/>
<dbReference type="FlyBase" id="FBgn0000097">
    <property type="gene designation" value="aop"/>
</dbReference>
<dbReference type="VEuPathDB" id="VectorBase:FBgn0000097"/>
<dbReference type="eggNOG" id="KOG3804">
    <property type="taxonomic scope" value="Eukaryota"/>
</dbReference>
<dbReference type="HOGENOM" id="CLU_325474_0_0_1"/>
<dbReference type="InParanoid" id="Q01842"/>
<dbReference type="OMA" id="DSFRHMR"/>
<dbReference type="OrthoDB" id="6408625at2759"/>
<dbReference type="PhylomeDB" id="Q01842"/>
<dbReference type="Reactome" id="R-DME-8939245">
    <property type="pathway name" value="RUNX1 regulates transcription of genes involved in BCR signaling"/>
</dbReference>
<dbReference type="SignaLink" id="Q01842"/>
<dbReference type="BioGRID-ORCS" id="33392">
    <property type="hits" value="1 hit in 3 CRISPR screens"/>
</dbReference>
<dbReference type="ChiTaRS" id="aop">
    <property type="organism name" value="fly"/>
</dbReference>
<dbReference type="EvolutionaryTrace" id="Q01842"/>
<dbReference type="GenomeRNAi" id="33392"/>
<dbReference type="PRO" id="PR:Q01842"/>
<dbReference type="Proteomes" id="UP000000803">
    <property type="component" value="Chromosome 2L"/>
</dbReference>
<dbReference type="Bgee" id="FBgn0000097">
    <property type="expression patterns" value="Expressed in nurse follicle cell (Drosophila) in ovary and 275 other cell types or tissues"/>
</dbReference>
<dbReference type="ExpressionAtlas" id="Q01842">
    <property type="expression patterns" value="baseline and differential"/>
</dbReference>
<dbReference type="GO" id="GO:0005829">
    <property type="term" value="C:cytosol"/>
    <property type="evidence" value="ECO:0000314"/>
    <property type="project" value="FlyBase"/>
</dbReference>
<dbReference type="GO" id="GO:0005654">
    <property type="term" value="C:nucleoplasm"/>
    <property type="evidence" value="ECO:0007005"/>
    <property type="project" value="FlyBase"/>
</dbReference>
<dbReference type="GO" id="GO:0005634">
    <property type="term" value="C:nucleus"/>
    <property type="evidence" value="ECO:0000314"/>
    <property type="project" value="FlyBase"/>
</dbReference>
<dbReference type="GO" id="GO:0003677">
    <property type="term" value="F:DNA binding"/>
    <property type="evidence" value="ECO:0000314"/>
    <property type="project" value="FlyBase"/>
</dbReference>
<dbReference type="GO" id="GO:0000981">
    <property type="term" value="F:DNA-binding transcription factor activity, RNA polymerase II-specific"/>
    <property type="evidence" value="ECO:0000314"/>
    <property type="project" value="FlyBase"/>
</dbReference>
<dbReference type="GO" id="GO:0001227">
    <property type="term" value="F:DNA-binding transcription repressor activity, RNA polymerase II-specific"/>
    <property type="evidence" value="ECO:0000314"/>
    <property type="project" value="FlyBase"/>
</dbReference>
<dbReference type="GO" id="GO:0019904">
    <property type="term" value="F:protein domain specific binding"/>
    <property type="evidence" value="ECO:0000353"/>
    <property type="project" value="FlyBase"/>
</dbReference>
<dbReference type="GO" id="GO:0000978">
    <property type="term" value="F:RNA polymerase II cis-regulatory region sequence-specific DNA binding"/>
    <property type="evidence" value="ECO:0000314"/>
    <property type="project" value="FlyBase"/>
</dbReference>
<dbReference type="GO" id="GO:0000977">
    <property type="term" value="F:RNA polymerase II transcription regulatory region sequence-specific DNA binding"/>
    <property type="evidence" value="ECO:0000314"/>
    <property type="project" value="FlyBase"/>
</dbReference>
<dbReference type="GO" id="GO:0007298">
    <property type="term" value="P:border follicle cell migration"/>
    <property type="evidence" value="ECO:0000315"/>
    <property type="project" value="FlyBase"/>
</dbReference>
<dbReference type="GO" id="GO:0030154">
    <property type="term" value="P:cell differentiation"/>
    <property type="evidence" value="ECO:0000318"/>
    <property type="project" value="GO_Central"/>
</dbReference>
<dbReference type="GO" id="GO:0001709">
    <property type="term" value="P:cell fate determination"/>
    <property type="evidence" value="ECO:0000315"/>
    <property type="project" value="FlyBase"/>
</dbReference>
<dbReference type="GO" id="GO:0008340">
    <property type="term" value="P:determination of adult lifespan"/>
    <property type="evidence" value="ECO:0000315"/>
    <property type="project" value="FlyBase"/>
</dbReference>
<dbReference type="GO" id="GO:0007391">
    <property type="term" value="P:dorsal closure"/>
    <property type="evidence" value="ECO:0000304"/>
    <property type="project" value="FlyBase"/>
</dbReference>
<dbReference type="GO" id="GO:0006897">
    <property type="term" value="P:endocytosis"/>
    <property type="evidence" value="ECO:0000315"/>
    <property type="project" value="FlyBase"/>
</dbReference>
<dbReference type="GO" id="GO:0007173">
    <property type="term" value="P:epidermal growth factor receptor signaling pathway"/>
    <property type="evidence" value="ECO:0000315"/>
    <property type="project" value="FlyBase"/>
</dbReference>
<dbReference type="GO" id="GO:0008543">
    <property type="term" value="P:fibroblast growth factor receptor signaling pathway"/>
    <property type="evidence" value="ECO:0000315"/>
    <property type="project" value="FlyBase"/>
</dbReference>
<dbReference type="GO" id="GO:0008406">
    <property type="term" value="P:gonad development"/>
    <property type="evidence" value="ECO:0000315"/>
    <property type="project" value="FlyBase"/>
</dbReference>
<dbReference type="GO" id="GO:0055001">
    <property type="term" value="P:muscle cell development"/>
    <property type="evidence" value="ECO:0000315"/>
    <property type="project" value="FlyBase"/>
</dbReference>
<dbReference type="GO" id="GO:0090090">
    <property type="term" value="P:negative regulation of canonical Wnt signaling pathway"/>
    <property type="evidence" value="ECO:0000315"/>
    <property type="project" value="FlyBase"/>
</dbReference>
<dbReference type="GO" id="GO:0110118">
    <property type="term" value="P:negative regulation of compound eye photoreceptor cell differentiation"/>
    <property type="evidence" value="ECO:0000315"/>
    <property type="project" value="FlyBase"/>
</dbReference>
<dbReference type="GO" id="GO:0045892">
    <property type="term" value="P:negative regulation of DNA-templated transcription"/>
    <property type="evidence" value="ECO:0000315"/>
    <property type="project" value="UniProtKB"/>
</dbReference>
<dbReference type="GO" id="GO:0035157">
    <property type="term" value="P:negative regulation of fusion cell fate specification"/>
    <property type="evidence" value="ECO:0000315"/>
    <property type="project" value="FlyBase"/>
</dbReference>
<dbReference type="GO" id="GO:0010629">
    <property type="term" value="P:negative regulation of gene expression"/>
    <property type="evidence" value="ECO:0000316"/>
    <property type="project" value="FlyBase"/>
</dbReference>
<dbReference type="GO" id="GO:0045677">
    <property type="term" value="P:negative regulation of R7 cell differentiation"/>
    <property type="evidence" value="ECO:0000315"/>
    <property type="project" value="FlyBase"/>
</dbReference>
<dbReference type="GO" id="GO:0035155">
    <property type="term" value="P:negative regulation of terminal cell fate specification, open tracheal system"/>
    <property type="evidence" value="ECO:0000315"/>
    <property type="project" value="FlyBase"/>
</dbReference>
<dbReference type="GO" id="GO:0000122">
    <property type="term" value="P:negative regulation of transcription by RNA polymerase II"/>
    <property type="evidence" value="ECO:0000314"/>
    <property type="project" value="FlyBase"/>
</dbReference>
<dbReference type="GO" id="GO:0060233">
    <property type="term" value="P:oenocyte delamination"/>
    <property type="evidence" value="ECO:0000315"/>
    <property type="project" value="FlyBase"/>
</dbReference>
<dbReference type="GO" id="GO:1903688">
    <property type="term" value="P:positive regulation of border follicle cell migration"/>
    <property type="evidence" value="ECO:0000315"/>
    <property type="project" value="FlyBase"/>
</dbReference>
<dbReference type="GO" id="GO:0010628">
    <property type="term" value="P:positive regulation of gene expression"/>
    <property type="evidence" value="ECO:0000315"/>
    <property type="project" value="UniProtKB"/>
</dbReference>
<dbReference type="GO" id="GO:0007464">
    <property type="term" value="P:R3/R4 cell fate commitment"/>
    <property type="evidence" value="ECO:0000315"/>
    <property type="project" value="FlyBase"/>
</dbReference>
<dbReference type="GO" id="GO:0090175">
    <property type="term" value="P:regulation of establishment of planar polarity"/>
    <property type="evidence" value="ECO:0000316"/>
    <property type="project" value="FlyBase"/>
</dbReference>
<dbReference type="GO" id="GO:0050767">
    <property type="term" value="P:regulation of neurogenesis"/>
    <property type="evidence" value="ECO:0000315"/>
    <property type="project" value="FlyBase"/>
</dbReference>
<dbReference type="GO" id="GO:0006357">
    <property type="term" value="P:regulation of transcription by RNA polymerase II"/>
    <property type="evidence" value="ECO:0000318"/>
    <property type="project" value="GO_Central"/>
</dbReference>
<dbReference type="GO" id="GO:0045500">
    <property type="term" value="P:sevenless signaling pathway"/>
    <property type="evidence" value="ECO:0000314"/>
    <property type="project" value="FlyBase"/>
</dbReference>
<dbReference type="GO" id="GO:0048010">
    <property type="term" value="P:vascular endothelial growth factor receptor signaling pathway"/>
    <property type="evidence" value="ECO:0000314"/>
    <property type="project" value="FlyBase"/>
</dbReference>
<dbReference type="CDD" id="cd08535">
    <property type="entry name" value="SAM_PNT-Tel_Yan"/>
    <property type="match status" value="1"/>
</dbReference>
<dbReference type="FunFam" id="1.10.150.50:FF:000061">
    <property type="entry name" value="Ets DNA-binding protein pokkuri"/>
    <property type="match status" value="1"/>
</dbReference>
<dbReference type="FunFam" id="1.10.10.10:FF:000516">
    <property type="entry name" value="ets DNA-binding protein pokkuri"/>
    <property type="match status" value="1"/>
</dbReference>
<dbReference type="Gene3D" id="1.10.150.50">
    <property type="entry name" value="Transcription Factor, Ets-1"/>
    <property type="match status" value="1"/>
</dbReference>
<dbReference type="Gene3D" id="1.10.10.10">
    <property type="entry name" value="Winged helix-like DNA-binding domain superfamily/Winged helix DNA-binding domain"/>
    <property type="match status" value="1"/>
</dbReference>
<dbReference type="InterPro" id="IPR000418">
    <property type="entry name" value="Ets_dom"/>
</dbReference>
<dbReference type="InterPro" id="IPR046328">
    <property type="entry name" value="ETS_fam"/>
</dbReference>
<dbReference type="InterPro" id="IPR003118">
    <property type="entry name" value="Pointed_dom"/>
</dbReference>
<dbReference type="InterPro" id="IPR013761">
    <property type="entry name" value="SAM/pointed_sf"/>
</dbReference>
<dbReference type="InterPro" id="IPR036388">
    <property type="entry name" value="WH-like_DNA-bd_sf"/>
</dbReference>
<dbReference type="InterPro" id="IPR036390">
    <property type="entry name" value="WH_DNA-bd_sf"/>
</dbReference>
<dbReference type="PANTHER" id="PTHR11849">
    <property type="entry name" value="ETS"/>
    <property type="match status" value="1"/>
</dbReference>
<dbReference type="PANTHER" id="PTHR11849:SF201">
    <property type="entry name" value="ETS DNA-BINDING PROTEIN POKKURI"/>
    <property type="match status" value="1"/>
</dbReference>
<dbReference type="Pfam" id="PF00178">
    <property type="entry name" value="Ets"/>
    <property type="match status" value="1"/>
</dbReference>
<dbReference type="Pfam" id="PF02198">
    <property type="entry name" value="SAM_PNT"/>
    <property type="match status" value="1"/>
</dbReference>
<dbReference type="PRINTS" id="PR00454">
    <property type="entry name" value="ETSDOMAIN"/>
</dbReference>
<dbReference type="SMART" id="SM00413">
    <property type="entry name" value="ETS"/>
    <property type="match status" value="1"/>
</dbReference>
<dbReference type="SMART" id="SM00251">
    <property type="entry name" value="SAM_PNT"/>
    <property type="match status" value="1"/>
</dbReference>
<dbReference type="SUPFAM" id="SSF47769">
    <property type="entry name" value="SAM/Pointed domain"/>
    <property type="match status" value="1"/>
</dbReference>
<dbReference type="SUPFAM" id="SSF46785">
    <property type="entry name" value="Winged helix' DNA-binding domain"/>
    <property type="match status" value="1"/>
</dbReference>
<dbReference type="PROSITE" id="PS00345">
    <property type="entry name" value="ETS_DOMAIN_1"/>
    <property type="match status" value="1"/>
</dbReference>
<dbReference type="PROSITE" id="PS00346">
    <property type="entry name" value="ETS_DOMAIN_2"/>
    <property type="match status" value="1"/>
</dbReference>
<dbReference type="PROSITE" id="PS50061">
    <property type="entry name" value="ETS_DOMAIN_3"/>
    <property type="match status" value="1"/>
</dbReference>
<dbReference type="PROSITE" id="PS51433">
    <property type="entry name" value="PNT"/>
    <property type="match status" value="1"/>
</dbReference>
<accession>Q01842</accession>
<accession>Q6AWH6</accession>
<accession>Q6NR43</accession>
<accession>Q9VQ81</accession>